<organism>
    <name type="scientific">Chloroherpeton thalassium (strain ATCC 35110 / GB-78)</name>
    <dbReference type="NCBI Taxonomy" id="517418"/>
    <lineage>
        <taxon>Bacteria</taxon>
        <taxon>Pseudomonadati</taxon>
        <taxon>Chlorobiota</taxon>
        <taxon>Chlorobiia</taxon>
        <taxon>Chlorobiales</taxon>
        <taxon>Chloroherpetonaceae</taxon>
        <taxon>Chloroherpeton</taxon>
    </lineage>
</organism>
<gene>
    <name evidence="1" type="primary">hisS</name>
    <name type="ordered locus">Ctha_0014</name>
</gene>
<accession>B3QS95</accession>
<protein>
    <recommendedName>
        <fullName evidence="1">Histidine--tRNA ligase</fullName>
        <ecNumber evidence="1">6.1.1.21</ecNumber>
    </recommendedName>
    <alternativeName>
        <fullName evidence="1">Histidyl-tRNA synthetase</fullName>
        <shortName evidence="1">HisRS</shortName>
    </alternativeName>
</protein>
<reference key="1">
    <citation type="submission" date="2008-06" db="EMBL/GenBank/DDBJ databases">
        <title>Complete sequence of Chloroherpeton thalassium ATCC 35110.</title>
        <authorList>
            <consortium name="US DOE Joint Genome Institute"/>
            <person name="Lucas S."/>
            <person name="Copeland A."/>
            <person name="Lapidus A."/>
            <person name="Glavina del Rio T."/>
            <person name="Dalin E."/>
            <person name="Tice H."/>
            <person name="Bruce D."/>
            <person name="Goodwin L."/>
            <person name="Pitluck S."/>
            <person name="Schmutz J."/>
            <person name="Larimer F."/>
            <person name="Land M."/>
            <person name="Hauser L."/>
            <person name="Kyrpides N."/>
            <person name="Mikhailova N."/>
            <person name="Liu Z."/>
            <person name="Li T."/>
            <person name="Zhao F."/>
            <person name="Overmann J."/>
            <person name="Bryant D.A."/>
            <person name="Richardson P."/>
        </authorList>
    </citation>
    <scope>NUCLEOTIDE SEQUENCE [LARGE SCALE GENOMIC DNA]</scope>
    <source>
        <strain>ATCC 35110 / GB-78</strain>
    </source>
</reference>
<name>SYH_CHLT3</name>
<sequence length="427" mass="48069">MKFQTIKGTKDILPSEIHKWHYVENTVRGVFQRFGYNEIRTPVFEQTALFQRGIGETTDIVGKEMYSFQPDPESESLTLRPEMTAPVMRAYLQHSLSGTSPATKVFYISEIFRKERPQAGRQRQFWQFGCECIGSDQPEADAEVILLMTEIYRQLGIKNFTLRLNSLGETESRLAHREALQTYLKPHFDLLDEISKTRFEKNPLRILDSKNPALAEIIAGAPHITEFLDDASKAHFQTVQTYLKNAGLDFTVDPTLVRGLDYYSRTAFELVSTDLGAQDALAGGGRYDSLATVLGAKNSSAAVGFAAGIERLLIIMEKLDLFQAVLPPAPLLFIATQSPVAKEWAFQTVNRLRTEGIHVALDLLGRSLKAQMREANRTHAKYVLIVGEEELSTGRFQLKHLQTSEQVELSEADIFTKMQTETTQDLG</sequence>
<keyword id="KW-0030">Aminoacyl-tRNA synthetase</keyword>
<keyword id="KW-0067">ATP-binding</keyword>
<keyword id="KW-0963">Cytoplasm</keyword>
<keyword id="KW-0436">Ligase</keyword>
<keyword id="KW-0547">Nucleotide-binding</keyword>
<keyword id="KW-0648">Protein biosynthesis</keyword>
<keyword id="KW-1185">Reference proteome</keyword>
<comment type="catalytic activity">
    <reaction evidence="1">
        <text>tRNA(His) + L-histidine + ATP = L-histidyl-tRNA(His) + AMP + diphosphate + H(+)</text>
        <dbReference type="Rhea" id="RHEA:17313"/>
        <dbReference type="Rhea" id="RHEA-COMP:9665"/>
        <dbReference type="Rhea" id="RHEA-COMP:9689"/>
        <dbReference type="ChEBI" id="CHEBI:15378"/>
        <dbReference type="ChEBI" id="CHEBI:30616"/>
        <dbReference type="ChEBI" id="CHEBI:33019"/>
        <dbReference type="ChEBI" id="CHEBI:57595"/>
        <dbReference type="ChEBI" id="CHEBI:78442"/>
        <dbReference type="ChEBI" id="CHEBI:78527"/>
        <dbReference type="ChEBI" id="CHEBI:456215"/>
        <dbReference type="EC" id="6.1.1.21"/>
    </reaction>
</comment>
<comment type="subunit">
    <text evidence="1">Homodimer.</text>
</comment>
<comment type="subcellular location">
    <subcellularLocation>
        <location evidence="1">Cytoplasm</location>
    </subcellularLocation>
</comment>
<comment type="similarity">
    <text evidence="1">Belongs to the class-II aminoacyl-tRNA synthetase family.</text>
</comment>
<feature type="chain" id="PRO_1000203127" description="Histidine--tRNA ligase">
    <location>
        <begin position="1"/>
        <end position="427"/>
    </location>
</feature>
<evidence type="ECO:0000255" key="1">
    <source>
        <dbReference type="HAMAP-Rule" id="MF_00127"/>
    </source>
</evidence>
<proteinExistence type="inferred from homology"/>
<dbReference type="EC" id="6.1.1.21" evidence="1"/>
<dbReference type="EMBL" id="CP001100">
    <property type="protein sequence ID" value="ACF12486.1"/>
    <property type="molecule type" value="Genomic_DNA"/>
</dbReference>
<dbReference type="RefSeq" id="WP_012498570.1">
    <property type="nucleotide sequence ID" value="NC_011026.1"/>
</dbReference>
<dbReference type="SMR" id="B3QS95"/>
<dbReference type="STRING" id="517418.Ctha_0014"/>
<dbReference type="KEGG" id="cts:Ctha_0014"/>
<dbReference type="eggNOG" id="COG0124">
    <property type="taxonomic scope" value="Bacteria"/>
</dbReference>
<dbReference type="HOGENOM" id="CLU_025113_1_1_10"/>
<dbReference type="OrthoDB" id="9800814at2"/>
<dbReference type="Proteomes" id="UP000001208">
    <property type="component" value="Chromosome"/>
</dbReference>
<dbReference type="GO" id="GO:0005737">
    <property type="term" value="C:cytoplasm"/>
    <property type="evidence" value="ECO:0007669"/>
    <property type="project" value="UniProtKB-SubCell"/>
</dbReference>
<dbReference type="GO" id="GO:0005524">
    <property type="term" value="F:ATP binding"/>
    <property type="evidence" value="ECO:0007669"/>
    <property type="project" value="UniProtKB-UniRule"/>
</dbReference>
<dbReference type="GO" id="GO:0004821">
    <property type="term" value="F:histidine-tRNA ligase activity"/>
    <property type="evidence" value="ECO:0007669"/>
    <property type="project" value="UniProtKB-UniRule"/>
</dbReference>
<dbReference type="GO" id="GO:0006427">
    <property type="term" value="P:histidyl-tRNA aminoacylation"/>
    <property type="evidence" value="ECO:0007669"/>
    <property type="project" value="UniProtKB-UniRule"/>
</dbReference>
<dbReference type="CDD" id="cd00773">
    <property type="entry name" value="HisRS-like_core"/>
    <property type="match status" value="1"/>
</dbReference>
<dbReference type="CDD" id="cd00859">
    <property type="entry name" value="HisRS_anticodon"/>
    <property type="match status" value="1"/>
</dbReference>
<dbReference type="Gene3D" id="3.40.50.800">
    <property type="entry name" value="Anticodon-binding domain"/>
    <property type="match status" value="1"/>
</dbReference>
<dbReference type="Gene3D" id="3.30.930.10">
    <property type="entry name" value="Bira Bifunctional Protein, Domain 2"/>
    <property type="match status" value="1"/>
</dbReference>
<dbReference type="HAMAP" id="MF_00127">
    <property type="entry name" value="His_tRNA_synth"/>
    <property type="match status" value="1"/>
</dbReference>
<dbReference type="InterPro" id="IPR006195">
    <property type="entry name" value="aa-tRNA-synth_II"/>
</dbReference>
<dbReference type="InterPro" id="IPR045864">
    <property type="entry name" value="aa-tRNA-synth_II/BPL/LPL"/>
</dbReference>
<dbReference type="InterPro" id="IPR004154">
    <property type="entry name" value="Anticodon-bd"/>
</dbReference>
<dbReference type="InterPro" id="IPR036621">
    <property type="entry name" value="Anticodon-bd_dom_sf"/>
</dbReference>
<dbReference type="InterPro" id="IPR015807">
    <property type="entry name" value="His-tRNA-ligase"/>
</dbReference>
<dbReference type="InterPro" id="IPR041715">
    <property type="entry name" value="HisRS-like_core"/>
</dbReference>
<dbReference type="InterPro" id="IPR004516">
    <property type="entry name" value="HisRS/HisZ"/>
</dbReference>
<dbReference type="InterPro" id="IPR033656">
    <property type="entry name" value="HisRS_anticodon"/>
</dbReference>
<dbReference type="NCBIfam" id="TIGR00442">
    <property type="entry name" value="hisS"/>
    <property type="match status" value="1"/>
</dbReference>
<dbReference type="PANTHER" id="PTHR43707:SF1">
    <property type="entry name" value="HISTIDINE--TRNA LIGASE, MITOCHONDRIAL-RELATED"/>
    <property type="match status" value="1"/>
</dbReference>
<dbReference type="PANTHER" id="PTHR43707">
    <property type="entry name" value="HISTIDYL-TRNA SYNTHETASE"/>
    <property type="match status" value="1"/>
</dbReference>
<dbReference type="Pfam" id="PF03129">
    <property type="entry name" value="HGTP_anticodon"/>
    <property type="match status" value="1"/>
</dbReference>
<dbReference type="Pfam" id="PF13393">
    <property type="entry name" value="tRNA-synt_His"/>
    <property type="match status" value="1"/>
</dbReference>
<dbReference type="PIRSF" id="PIRSF001549">
    <property type="entry name" value="His-tRNA_synth"/>
    <property type="match status" value="1"/>
</dbReference>
<dbReference type="SUPFAM" id="SSF52954">
    <property type="entry name" value="Class II aaRS ABD-related"/>
    <property type="match status" value="1"/>
</dbReference>
<dbReference type="SUPFAM" id="SSF55681">
    <property type="entry name" value="Class II aaRS and biotin synthetases"/>
    <property type="match status" value="1"/>
</dbReference>
<dbReference type="PROSITE" id="PS50862">
    <property type="entry name" value="AA_TRNA_LIGASE_II"/>
    <property type="match status" value="1"/>
</dbReference>